<keyword id="KW-0963">Cytoplasm</keyword>
<keyword id="KW-0597">Phosphoprotein</keyword>
<keyword id="KW-1185">Reference proteome</keyword>
<dbReference type="EMBL" id="CU329671">
    <property type="protein sequence ID" value="CAA16843.1"/>
    <property type="molecule type" value="Genomic_DNA"/>
</dbReference>
<dbReference type="PIR" id="T39874">
    <property type="entry name" value="T39874"/>
</dbReference>
<dbReference type="RefSeq" id="NP_596367.1">
    <property type="nucleotide sequence ID" value="NM_001022288.2"/>
</dbReference>
<dbReference type="SMR" id="O42973"/>
<dbReference type="BioGRID" id="277278">
    <property type="interactions" value="3"/>
</dbReference>
<dbReference type="FunCoup" id="O42973">
    <property type="interactions" value="39"/>
</dbReference>
<dbReference type="STRING" id="284812.O42973"/>
<dbReference type="iPTMnet" id="O42973"/>
<dbReference type="PaxDb" id="4896-SPBC20F10.03.1"/>
<dbReference type="EnsemblFungi" id="SPBC20F10.03.1">
    <property type="protein sequence ID" value="SPBC20F10.03.1:pep"/>
    <property type="gene ID" value="SPBC20F10.03"/>
</dbReference>
<dbReference type="KEGG" id="spo:2540757"/>
<dbReference type="PomBase" id="SPBC20F10.03"/>
<dbReference type="VEuPathDB" id="FungiDB:SPBC20F10.03"/>
<dbReference type="eggNOG" id="KOG2842">
    <property type="taxonomic scope" value="Eukaryota"/>
</dbReference>
<dbReference type="HOGENOM" id="CLU_630307_0_0_1"/>
<dbReference type="InParanoid" id="O42973"/>
<dbReference type="OMA" id="HIFDNPV"/>
<dbReference type="PhylomeDB" id="O42973"/>
<dbReference type="PRO" id="PR:O42973"/>
<dbReference type="Proteomes" id="UP000002485">
    <property type="component" value="Chromosome II"/>
</dbReference>
<dbReference type="GO" id="GO:0005829">
    <property type="term" value="C:cytosol"/>
    <property type="evidence" value="ECO:0007005"/>
    <property type="project" value="PomBase"/>
</dbReference>
<dbReference type="GO" id="GO:0005634">
    <property type="term" value="C:nucleus"/>
    <property type="evidence" value="ECO:0000250"/>
    <property type="project" value="PomBase"/>
</dbReference>
<dbReference type="InterPro" id="IPR016024">
    <property type="entry name" value="ARM-type_fold"/>
</dbReference>
<dbReference type="InterPro" id="IPR039777">
    <property type="entry name" value="IFRD"/>
</dbReference>
<dbReference type="InterPro" id="IPR007701">
    <property type="entry name" value="Interferon-rel_develop_reg_N"/>
</dbReference>
<dbReference type="PANTHER" id="PTHR12354">
    <property type="entry name" value="INTERFERON-RELATED DEVELOPMENTAL REGULATOR"/>
    <property type="match status" value="1"/>
</dbReference>
<dbReference type="PANTHER" id="PTHR12354:SF1">
    <property type="entry name" value="INTERFERON-RELATED DEVELOPMENTAL REGULATOR 1"/>
    <property type="match status" value="1"/>
</dbReference>
<dbReference type="Pfam" id="PF05004">
    <property type="entry name" value="IFRD"/>
    <property type="match status" value="1"/>
</dbReference>
<dbReference type="SUPFAM" id="SSF48371">
    <property type="entry name" value="ARM repeat"/>
    <property type="match status" value="1"/>
</dbReference>
<accession>O42973</accession>
<evidence type="ECO:0000256" key="1">
    <source>
        <dbReference type="SAM" id="MobiDB-lite"/>
    </source>
</evidence>
<evidence type="ECO:0000269" key="2">
    <source>
    </source>
</evidence>
<evidence type="ECO:0000269" key="3">
    <source>
    </source>
</evidence>
<evidence type="ECO:0000305" key="4"/>
<reference key="1">
    <citation type="journal article" date="2002" name="Nature">
        <title>The genome sequence of Schizosaccharomyces pombe.</title>
        <authorList>
            <person name="Wood V."/>
            <person name="Gwilliam R."/>
            <person name="Rajandream M.A."/>
            <person name="Lyne M.H."/>
            <person name="Lyne R."/>
            <person name="Stewart A."/>
            <person name="Sgouros J.G."/>
            <person name="Peat N."/>
            <person name="Hayles J."/>
            <person name="Baker S.G."/>
            <person name="Basham D."/>
            <person name="Bowman S."/>
            <person name="Brooks K."/>
            <person name="Brown D."/>
            <person name="Brown S."/>
            <person name="Chillingworth T."/>
            <person name="Churcher C.M."/>
            <person name="Collins M."/>
            <person name="Connor R."/>
            <person name="Cronin A."/>
            <person name="Davis P."/>
            <person name="Feltwell T."/>
            <person name="Fraser A."/>
            <person name="Gentles S."/>
            <person name="Goble A."/>
            <person name="Hamlin N."/>
            <person name="Harris D.E."/>
            <person name="Hidalgo J."/>
            <person name="Hodgson G."/>
            <person name="Holroyd S."/>
            <person name="Hornsby T."/>
            <person name="Howarth S."/>
            <person name="Huckle E.J."/>
            <person name="Hunt S."/>
            <person name="Jagels K."/>
            <person name="James K.D."/>
            <person name="Jones L."/>
            <person name="Jones M."/>
            <person name="Leather S."/>
            <person name="McDonald S."/>
            <person name="McLean J."/>
            <person name="Mooney P."/>
            <person name="Moule S."/>
            <person name="Mungall K.L."/>
            <person name="Murphy L.D."/>
            <person name="Niblett D."/>
            <person name="Odell C."/>
            <person name="Oliver K."/>
            <person name="O'Neil S."/>
            <person name="Pearson D."/>
            <person name="Quail M.A."/>
            <person name="Rabbinowitsch E."/>
            <person name="Rutherford K.M."/>
            <person name="Rutter S."/>
            <person name="Saunders D."/>
            <person name="Seeger K."/>
            <person name="Sharp S."/>
            <person name="Skelton J."/>
            <person name="Simmonds M.N."/>
            <person name="Squares R."/>
            <person name="Squares S."/>
            <person name="Stevens K."/>
            <person name="Taylor K."/>
            <person name="Taylor R.G."/>
            <person name="Tivey A."/>
            <person name="Walsh S.V."/>
            <person name="Warren T."/>
            <person name="Whitehead S."/>
            <person name="Woodward J.R."/>
            <person name="Volckaert G."/>
            <person name="Aert R."/>
            <person name="Robben J."/>
            <person name="Grymonprez B."/>
            <person name="Weltjens I."/>
            <person name="Vanstreels E."/>
            <person name="Rieger M."/>
            <person name="Schaefer M."/>
            <person name="Mueller-Auer S."/>
            <person name="Gabel C."/>
            <person name="Fuchs M."/>
            <person name="Duesterhoeft A."/>
            <person name="Fritzc C."/>
            <person name="Holzer E."/>
            <person name="Moestl D."/>
            <person name="Hilbert H."/>
            <person name="Borzym K."/>
            <person name="Langer I."/>
            <person name="Beck A."/>
            <person name="Lehrach H."/>
            <person name="Reinhardt R."/>
            <person name="Pohl T.M."/>
            <person name="Eger P."/>
            <person name="Zimmermann W."/>
            <person name="Wedler H."/>
            <person name="Wambutt R."/>
            <person name="Purnelle B."/>
            <person name="Goffeau A."/>
            <person name="Cadieu E."/>
            <person name="Dreano S."/>
            <person name="Gloux S."/>
            <person name="Lelaure V."/>
            <person name="Mottier S."/>
            <person name="Galibert F."/>
            <person name="Aves S.J."/>
            <person name="Xiang Z."/>
            <person name="Hunt C."/>
            <person name="Moore K."/>
            <person name="Hurst S.M."/>
            <person name="Lucas M."/>
            <person name="Rochet M."/>
            <person name="Gaillardin C."/>
            <person name="Tallada V.A."/>
            <person name="Garzon A."/>
            <person name="Thode G."/>
            <person name="Daga R.R."/>
            <person name="Cruzado L."/>
            <person name="Jimenez J."/>
            <person name="Sanchez M."/>
            <person name="del Rey F."/>
            <person name="Benito J."/>
            <person name="Dominguez A."/>
            <person name="Revuelta J.L."/>
            <person name="Moreno S."/>
            <person name="Armstrong J."/>
            <person name="Forsburg S.L."/>
            <person name="Cerutti L."/>
            <person name="Lowe T."/>
            <person name="McCombie W.R."/>
            <person name="Paulsen I."/>
            <person name="Potashkin J."/>
            <person name="Shpakovski G.V."/>
            <person name="Ussery D."/>
            <person name="Barrell B.G."/>
            <person name="Nurse P."/>
        </authorList>
    </citation>
    <scope>NUCLEOTIDE SEQUENCE [LARGE SCALE GENOMIC DNA]</scope>
    <source>
        <strain>972 / ATCC 24843</strain>
    </source>
</reference>
<reference key="2">
    <citation type="journal article" date="2006" name="Nat. Biotechnol.">
        <title>ORFeome cloning and global analysis of protein localization in the fission yeast Schizosaccharomyces pombe.</title>
        <authorList>
            <person name="Matsuyama A."/>
            <person name="Arai R."/>
            <person name="Yashiroda Y."/>
            <person name="Shirai A."/>
            <person name="Kamata A."/>
            <person name="Sekido S."/>
            <person name="Kobayashi Y."/>
            <person name="Hashimoto A."/>
            <person name="Hamamoto M."/>
            <person name="Hiraoka Y."/>
            <person name="Horinouchi S."/>
            <person name="Yoshida M."/>
        </authorList>
    </citation>
    <scope>SUBCELLULAR LOCATION [LARGE SCALE ANALYSIS]</scope>
</reference>
<reference key="3">
    <citation type="journal article" date="2008" name="J. Proteome Res.">
        <title>Phosphoproteome analysis of fission yeast.</title>
        <authorList>
            <person name="Wilson-Grady J.T."/>
            <person name="Villen J."/>
            <person name="Gygi S.P."/>
        </authorList>
    </citation>
    <scope>PHOSPHORYLATION [LARGE SCALE ANALYSIS] AT SER-393 AND SER-397</scope>
    <scope>IDENTIFICATION BY MASS SPECTROMETRY</scope>
</reference>
<feature type="chain" id="PRO_0000339410" description="Uncharacterized protein C20F10.03">
    <location>
        <begin position="1"/>
        <end position="446"/>
    </location>
</feature>
<feature type="region of interest" description="Disordered" evidence="1">
    <location>
        <begin position="411"/>
        <end position="431"/>
    </location>
</feature>
<feature type="modified residue" description="Phosphoserine" evidence="3">
    <location>
        <position position="393"/>
    </location>
</feature>
<feature type="modified residue" description="Phosphoserine" evidence="3">
    <location>
        <position position="397"/>
    </location>
</feature>
<gene>
    <name type="ORF">SPBC20F10.03</name>
</gene>
<proteinExistence type="evidence at protein level"/>
<comment type="subcellular location">
    <subcellularLocation>
        <location evidence="2">Cytoplasm</location>
    </subcellularLocation>
</comment>
<comment type="similarity">
    <text evidence="4">Belongs to the IFRD family.</text>
</comment>
<protein>
    <recommendedName>
        <fullName>Uncharacterized protein C20F10.03</fullName>
    </recommendedName>
</protein>
<name>YGZ3_SCHPO</name>
<organism>
    <name type="scientific">Schizosaccharomyces pombe (strain 972 / ATCC 24843)</name>
    <name type="common">Fission yeast</name>
    <dbReference type="NCBI Taxonomy" id="284812"/>
    <lineage>
        <taxon>Eukaryota</taxon>
        <taxon>Fungi</taxon>
        <taxon>Dikarya</taxon>
        <taxon>Ascomycota</taxon>
        <taxon>Taphrinomycotina</taxon>
        <taxon>Schizosaccharomycetes</taxon>
        <taxon>Schizosaccharomycetales</taxon>
        <taxon>Schizosaccharomycetaceae</taxon>
        <taxon>Schizosaccharomyces</taxon>
    </lineage>
</organism>
<sequence>MGKKDGKRQLMSDDDSFDTISILSGSMDQLSVGSMEDSGILKGSKTWLEELESTIDDLIEVKKIGAKEREEHLEKIYVICTRHYAKRISENVASLEELLLKIFNGPRSDKELILTIRIMCTFCLASVFQVEELWTKTEGRFNALANDAESSGIKCESILCFSLLTALLDSEADVIEFGDFLISILESDGAVVNSEDDEGVVGCACQALGLLLTCVTTESEFLASAAEALSEQLDAASIDVQLAAGQALAALFERVNEIRPDKDEENDESDVSQTSKFDDIIPDRNQLLITLRDLASESSKSIGKKQRKVLHQVFRNVLQTIEEPNARNILRNSVRIGQSTVQLDSWKKILRAQMLRYVLGSSFSEYFAKSTFIRYFLGYSGYVAGLSSRDPDSDFDSDNVDEYIDDHKRGLSSTERRDLDRVRDKQKKQDQRVRADYINSVYFSQN</sequence>